<reference key="1">
    <citation type="submission" date="2007-10" db="EMBL/GenBank/DDBJ databases">
        <title>Complete sequence of Shewanella pealeana ATCC 700345.</title>
        <authorList>
            <consortium name="US DOE Joint Genome Institute"/>
            <person name="Copeland A."/>
            <person name="Lucas S."/>
            <person name="Lapidus A."/>
            <person name="Barry K."/>
            <person name="Glavina del Rio T."/>
            <person name="Dalin E."/>
            <person name="Tice H."/>
            <person name="Pitluck S."/>
            <person name="Chertkov O."/>
            <person name="Brettin T."/>
            <person name="Bruce D."/>
            <person name="Detter J.C."/>
            <person name="Han C."/>
            <person name="Schmutz J."/>
            <person name="Larimer F."/>
            <person name="Land M."/>
            <person name="Hauser L."/>
            <person name="Kyrpides N."/>
            <person name="Kim E."/>
            <person name="Zhao J.-S.Z."/>
            <person name="Manno D."/>
            <person name="Hawari J."/>
            <person name="Richardson P."/>
        </authorList>
    </citation>
    <scope>NUCLEOTIDE SEQUENCE [LARGE SCALE GENOMIC DNA]</scope>
    <source>
        <strain>ATCC 700345 / ANG-SQ1</strain>
    </source>
</reference>
<name>FADI_SHEPA</name>
<proteinExistence type="inferred from homology"/>
<dbReference type="EC" id="2.3.1.16" evidence="1"/>
<dbReference type="EMBL" id="CP000851">
    <property type="protein sequence ID" value="ABV87919.1"/>
    <property type="molecule type" value="Genomic_DNA"/>
</dbReference>
<dbReference type="RefSeq" id="WP_012155825.1">
    <property type="nucleotide sequence ID" value="NC_009901.1"/>
</dbReference>
<dbReference type="SMR" id="A8H5T2"/>
<dbReference type="STRING" id="398579.Spea_2599"/>
<dbReference type="KEGG" id="spl:Spea_2599"/>
<dbReference type="eggNOG" id="COG0183">
    <property type="taxonomic scope" value="Bacteria"/>
</dbReference>
<dbReference type="HOGENOM" id="CLU_031026_2_0_6"/>
<dbReference type="OrthoDB" id="1402717at2"/>
<dbReference type="UniPathway" id="UPA00659"/>
<dbReference type="Proteomes" id="UP000002608">
    <property type="component" value="Chromosome"/>
</dbReference>
<dbReference type="GO" id="GO:0005829">
    <property type="term" value="C:cytosol"/>
    <property type="evidence" value="ECO:0007669"/>
    <property type="project" value="TreeGrafter"/>
</dbReference>
<dbReference type="GO" id="GO:0003988">
    <property type="term" value="F:acetyl-CoA C-acyltransferase activity"/>
    <property type="evidence" value="ECO:0007669"/>
    <property type="project" value="UniProtKB-UniRule"/>
</dbReference>
<dbReference type="GO" id="GO:0006635">
    <property type="term" value="P:fatty acid beta-oxidation"/>
    <property type="evidence" value="ECO:0007669"/>
    <property type="project" value="UniProtKB-UniRule"/>
</dbReference>
<dbReference type="CDD" id="cd00751">
    <property type="entry name" value="thiolase"/>
    <property type="match status" value="1"/>
</dbReference>
<dbReference type="FunFam" id="3.40.47.10:FF:000011">
    <property type="entry name" value="3-ketoacyl-CoA thiolase"/>
    <property type="match status" value="1"/>
</dbReference>
<dbReference type="Gene3D" id="3.40.47.10">
    <property type="match status" value="1"/>
</dbReference>
<dbReference type="HAMAP" id="MF_01618">
    <property type="entry name" value="FadI"/>
    <property type="match status" value="1"/>
</dbReference>
<dbReference type="InterPro" id="IPR012806">
    <property type="entry name" value="Ac-CoA_C-AcTrfase_FadI"/>
</dbReference>
<dbReference type="InterPro" id="IPR002155">
    <property type="entry name" value="Thiolase"/>
</dbReference>
<dbReference type="InterPro" id="IPR016039">
    <property type="entry name" value="Thiolase-like"/>
</dbReference>
<dbReference type="InterPro" id="IPR020610">
    <property type="entry name" value="Thiolase_AS"/>
</dbReference>
<dbReference type="InterPro" id="IPR020617">
    <property type="entry name" value="Thiolase_C"/>
</dbReference>
<dbReference type="InterPro" id="IPR020613">
    <property type="entry name" value="Thiolase_CS"/>
</dbReference>
<dbReference type="InterPro" id="IPR020616">
    <property type="entry name" value="Thiolase_N"/>
</dbReference>
<dbReference type="NCBIfam" id="TIGR01930">
    <property type="entry name" value="AcCoA-C-Actrans"/>
    <property type="match status" value="1"/>
</dbReference>
<dbReference type="NCBIfam" id="TIGR02446">
    <property type="entry name" value="FadI"/>
    <property type="match status" value="1"/>
</dbReference>
<dbReference type="NCBIfam" id="NF006516">
    <property type="entry name" value="PRK08963.1"/>
    <property type="match status" value="1"/>
</dbReference>
<dbReference type="PANTHER" id="PTHR18919:SF107">
    <property type="entry name" value="ACETYL-COA ACETYLTRANSFERASE, CYTOSOLIC"/>
    <property type="match status" value="1"/>
</dbReference>
<dbReference type="PANTHER" id="PTHR18919">
    <property type="entry name" value="ACETYL-COA C-ACYLTRANSFERASE"/>
    <property type="match status" value="1"/>
</dbReference>
<dbReference type="Pfam" id="PF02803">
    <property type="entry name" value="Thiolase_C"/>
    <property type="match status" value="1"/>
</dbReference>
<dbReference type="Pfam" id="PF00108">
    <property type="entry name" value="Thiolase_N"/>
    <property type="match status" value="1"/>
</dbReference>
<dbReference type="PIRSF" id="PIRSF000429">
    <property type="entry name" value="Ac-CoA_Ac_transf"/>
    <property type="match status" value="1"/>
</dbReference>
<dbReference type="SUPFAM" id="SSF53901">
    <property type="entry name" value="Thiolase-like"/>
    <property type="match status" value="2"/>
</dbReference>
<dbReference type="PROSITE" id="PS00737">
    <property type="entry name" value="THIOLASE_2"/>
    <property type="match status" value="1"/>
</dbReference>
<dbReference type="PROSITE" id="PS00099">
    <property type="entry name" value="THIOLASE_3"/>
    <property type="match status" value="1"/>
</dbReference>
<gene>
    <name evidence="1" type="primary">fadI</name>
    <name type="ordered locus">Spea_2599</name>
</gene>
<comment type="function">
    <text evidence="1">Catalyzes the final step of fatty acid oxidation in which acetyl-CoA is released and the CoA ester of a fatty acid two carbons shorter is formed.</text>
</comment>
<comment type="catalytic activity">
    <reaction evidence="1">
        <text>an acyl-CoA + acetyl-CoA = a 3-oxoacyl-CoA + CoA</text>
        <dbReference type="Rhea" id="RHEA:21564"/>
        <dbReference type="ChEBI" id="CHEBI:57287"/>
        <dbReference type="ChEBI" id="CHEBI:57288"/>
        <dbReference type="ChEBI" id="CHEBI:58342"/>
        <dbReference type="ChEBI" id="CHEBI:90726"/>
        <dbReference type="EC" id="2.3.1.16"/>
    </reaction>
</comment>
<comment type="pathway">
    <text evidence="1">Lipid metabolism; fatty acid beta-oxidation.</text>
</comment>
<comment type="subunit">
    <text evidence="1">Heterotetramer of two alpha chains (FadJ) and two beta chains (FadI).</text>
</comment>
<comment type="subcellular location">
    <subcellularLocation>
        <location evidence="1">Cytoplasm</location>
    </subcellularLocation>
</comment>
<comment type="similarity">
    <text evidence="1">Belongs to the thiolase-like superfamily. Thiolase family.</text>
</comment>
<keyword id="KW-0012">Acyltransferase</keyword>
<keyword id="KW-0963">Cytoplasm</keyword>
<keyword id="KW-0276">Fatty acid metabolism</keyword>
<keyword id="KW-0442">Lipid degradation</keyword>
<keyword id="KW-0443">Lipid metabolism</keyword>
<keyword id="KW-1185">Reference proteome</keyword>
<keyword id="KW-0808">Transferase</keyword>
<organism>
    <name type="scientific">Shewanella pealeana (strain ATCC 700345 / ANG-SQ1)</name>
    <dbReference type="NCBI Taxonomy" id="398579"/>
    <lineage>
        <taxon>Bacteria</taxon>
        <taxon>Pseudomonadati</taxon>
        <taxon>Pseudomonadota</taxon>
        <taxon>Gammaproteobacteria</taxon>
        <taxon>Alteromonadales</taxon>
        <taxon>Shewanellaceae</taxon>
        <taxon>Shewanella</taxon>
    </lineage>
</organism>
<protein>
    <recommendedName>
        <fullName evidence="1">3-ketoacyl-CoA thiolase</fullName>
        <ecNumber evidence="1">2.3.1.16</ecNumber>
    </recommendedName>
    <alternativeName>
        <fullName evidence="1">ACSs</fullName>
    </alternativeName>
    <alternativeName>
        <fullName evidence="1">Acetyl-CoA acyltransferase</fullName>
    </alternativeName>
    <alternativeName>
        <fullName evidence="1">Acyl-CoA ligase</fullName>
    </alternativeName>
    <alternativeName>
        <fullName evidence="1">Beta-ketothiolase</fullName>
    </alternativeName>
    <alternativeName>
        <fullName evidence="1">Fatty acid oxidation complex subunit beta</fullName>
    </alternativeName>
</protein>
<feature type="chain" id="PRO_1000088069" description="3-ketoacyl-CoA thiolase">
    <location>
        <begin position="1"/>
        <end position="436"/>
    </location>
</feature>
<feature type="active site" description="Acyl-thioester intermediate" evidence="1">
    <location>
        <position position="99"/>
    </location>
</feature>
<feature type="active site" description="Proton acceptor" evidence="1">
    <location>
        <position position="392"/>
    </location>
</feature>
<feature type="active site" description="Proton acceptor" evidence="1">
    <location>
        <position position="422"/>
    </location>
</feature>
<evidence type="ECO:0000255" key="1">
    <source>
        <dbReference type="HAMAP-Rule" id="MF_01618"/>
    </source>
</evidence>
<accession>A8H5T2</accession>
<sequence>MSDRQQVTNARGERIAIVSGLRTPFAKQATAFHGVSALDMGKMVVNELLARSELDPKEIEQLVYGQVVQMPAAPNIAREIVLGTGMNVSTDAYSVTRACATSFQSTVNVAESIMTGNLDIGIAGGADSSSVLPIGVSKKLAHALVDLNKARSLGQRLSIFRRLGLKDLLPVPPAVAEYSTGLSMGQTAEQMAKTYNISRADQDALAHRSHTLATETWNAGKLAEEVMVAHVPPYKAFIDRDNNIRENSKLESYAKLRPAFDRKHGSVTAANSTPLTDGASAVLLMSEGRAKALGYTPIGYIKSYAFTAIDVWEDMLMGPSYATPLALKRAGMELEDLTLIEMHEAFAAQTLANMQMFGSKKFAEEKLGRNRAIGEIDMSKFNVLGGSLAYGHPFAATGTRLVTQVCHELKRRGGGTGLATACAAGGLGAAMIVEVE</sequence>